<evidence type="ECO:0000250" key="1"/>
<evidence type="ECO:0000250" key="2">
    <source>
        <dbReference type="UniProtKB" id="P58462"/>
    </source>
</evidence>
<evidence type="ECO:0000250" key="3">
    <source>
        <dbReference type="UniProtKB" id="Q9H334"/>
    </source>
</evidence>
<evidence type="ECO:0000255" key="4">
    <source>
        <dbReference type="PROSITE-ProRule" id="PRU00089"/>
    </source>
</evidence>
<evidence type="ECO:0000256" key="5">
    <source>
        <dbReference type="SAM" id="MobiDB-lite"/>
    </source>
</evidence>
<accession>Q58NQ4</accession>
<protein>
    <recommendedName>
        <fullName>Forkhead box protein P1</fullName>
    </recommendedName>
</protein>
<sequence length="686" mass="76826">MMQESGTETKSNGSAIQNGASGGNHLLECSLREVRSNGETPSVEIGAADLTHLQQQQALQVARQLLLQQQQQQQQQQQQQQQQQVSGLKSPKRNDKQPALQVPVSVAMMTPQVITPQQMQQILQQQVLTPQQLQVLLQQQQALMLQQQQLQEFYKKQQEQLQLQLLQQQHAGKQPKEPQQQQVATQQLAFQQQLLQMQQLQQQHLLTLQRQGLLTIQPGQPTLPLQPLAQGMIPTELQQLWKEVTSSHTAEEAASNNHSSLDLSTTCVSSSAPSKTSLIINPHASTNGQLSVHTPKRESLSHEEHSHSHPLYGHGVCKWPGCEAVCEDFQSFLKHLNSEHALDDRSTAQCRVQMQVVQQLELQLAKDKERLQAMMTHLHVKSTEPKATPQPLNLVSSVTLSKTASEASPQSLPHTPTTPTAPITPVTQGPSVITTTSMHNVGPIRRRYSDKYNVPISSADIAQNQEFYKNAEVRPPFTYASLIRQAILESPEKQLTLNEIYNWFTRMFAYFRRNAATWKNAVRHNLSLHKCFVRVENVKGAVWTVDEQEFQKRRPQKISGNPSLIKNIQTSHTYCTPLNAALQASMAENSIPLYTTASMGNPTLGNLANVMREELNGAMEHTNSNGSDSSPGRSPMQAMHPVHVKEEPLDPDENEGPLSLVTTANHSPDFDHDRDYEDEPVNEDIE</sequence>
<organism>
    <name type="scientific">Gallus gallus</name>
    <name type="common">Chicken</name>
    <dbReference type="NCBI Taxonomy" id="9031"/>
    <lineage>
        <taxon>Eukaryota</taxon>
        <taxon>Metazoa</taxon>
        <taxon>Chordata</taxon>
        <taxon>Craniata</taxon>
        <taxon>Vertebrata</taxon>
        <taxon>Euteleostomi</taxon>
        <taxon>Archelosauria</taxon>
        <taxon>Archosauria</taxon>
        <taxon>Dinosauria</taxon>
        <taxon>Saurischia</taxon>
        <taxon>Theropoda</taxon>
        <taxon>Coelurosauria</taxon>
        <taxon>Aves</taxon>
        <taxon>Neognathae</taxon>
        <taxon>Galloanserae</taxon>
        <taxon>Galliformes</taxon>
        <taxon>Phasianidae</taxon>
        <taxon>Phasianinae</taxon>
        <taxon>Gallus</taxon>
    </lineage>
</organism>
<gene>
    <name type="primary">FOXP1</name>
</gene>
<proteinExistence type="evidence at transcript level"/>
<reference key="1">
    <citation type="journal article" date="2006" name="Cancer Res.">
        <title>Identification of potential human oncogenes by mapping the common viral integration sites in avian nephroblastoma.</title>
        <authorList>
            <person name="Pajer P."/>
            <person name="Pecenka V."/>
            <person name="Kralova J."/>
            <person name="Karafiat V."/>
            <person name="Prukova D."/>
            <person name="Zemanova Z."/>
            <person name="Kodet R."/>
            <person name="Dvorak M."/>
        </authorList>
    </citation>
    <scope>NUCLEOTIDE SEQUENCE [MRNA]</scope>
</reference>
<feature type="chain" id="PRO_0000294520" description="Forkhead box protein P1">
    <location>
        <begin position="1"/>
        <end position="686"/>
    </location>
</feature>
<feature type="zinc finger region" description="C2H2-type">
    <location>
        <begin position="315"/>
        <end position="340"/>
    </location>
</feature>
<feature type="DNA-binding region" description="Fork-head" evidence="4">
    <location>
        <begin position="474"/>
        <end position="564"/>
    </location>
</feature>
<feature type="region of interest" description="Disordered" evidence="5">
    <location>
        <begin position="1"/>
        <end position="23"/>
    </location>
</feature>
<feature type="region of interest" description="Disordered" evidence="5">
    <location>
        <begin position="279"/>
        <end position="306"/>
    </location>
</feature>
<feature type="region of interest" description="Leucine-zipper">
    <location>
        <begin position="357"/>
        <end position="378"/>
    </location>
</feature>
<feature type="region of interest" description="CTBP1-binding" evidence="1">
    <location>
        <begin position="391"/>
        <end position="395"/>
    </location>
</feature>
<feature type="region of interest" description="Disordered" evidence="5">
    <location>
        <begin position="403"/>
        <end position="440"/>
    </location>
</feature>
<feature type="region of interest" description="Disordered" evidence="5">
    <location>
        <begin position="619"/>
        <end position="686"/>
    </location>
</feature>
<feature type="compositionally biased region" description="Polar residues" evidence="5">
    <location>
        <begin position="1"/>
        <end position="19"/>
    </location>
</feature>
<feature type="compositionally biased region" description="Polar residues" evidence="5">
    <location>
        <begin position="279"/>
        <end position="292"/>
    </location>
</feature>
<feature type="compositionally biased region" description="Basic and acidic residues" evidence="5">
    <location>
        <begin position="295"/>
        <end position="306"/>
    </location>
</feature>
<feature type="compositionally biased region" description="Polar residues" evidence="5">
    <location>
        <begin position="403"/>
        <end position="412"/>
    </location>
</feature>
<feature type="compositionally biased region" description="Low complexity" evidence="5">
    <location>
        <begin position="413"/>
        <end position="427"/>
    </location>
</feature>
<feature type="compositionally biased region" description="Polar residues" evidence="5">
    <location>
        <begin position="428"/>
        <end position="439"/>
    </location>
</feature>
<feature type="compositionally biased region" description="Polar residues" evidence="5">
    <location>
        <begin position="621"/>
        <end position="632"/>
    </location>
</feature>
<feature type="compositionally biased region" description="Acidic residues" evidence="5">
    <location>
        <begin position="676"/>
        <end position="686"/>
    </location>
</feature>
<name>FOXP1_CHICK</name>
<comment type="function">
    <text evidence="3">Transcriptional repressor.</text>
</comment>
<comment type="subcellular location">
    <subcellularLocation>
        <location evidence="3">Nucleus</location>
    </subcellularLocation>
</comment>
<comment type="domain">
    <text evidence="2">The leucine-zipper is required for dimerization and transcriptional repression.</text>
</comment>
<keyword id="KW-0238">DNA-binding</keyword>
<keyword id="KW-0479">Metal-binding</keyword>
<keyword id="KW-0539">Nucleus</keyword>
<keyword id="KW-1185">Reference proteome</keyword>
<keyword id="KW-0678">Repressor</keyword>
<keyword id="KW-0804">Transcription</keyword>
<keyword id="KW-0805">Transcription regulation</keyword>
<keyword id="KW-0862">Zinc</keyword>
<keyword id="KW-0863">Zinc-finger</keyword>
<dbReference type="EMBL" id="AY935991">
    <property type="protein sequence ID" value="AAX36029.1"/>
    <property type="molecule type" value="mRNA"/>
</dbReference>
<dbReference type="RefSeq" id="NP_001019998.1">
    <property type="nucleotide sequence ID" value="NM_001024827.1"/>
</dbReference>
<dbReference type="RefSeq" id="XP_015148600.1">
    <property type="nucleotide sequence ID" value="XM_015293114.1"/>
</dbReference>
<dbReference type="RefSeq" id="XP_015148601.1">
    <property type="nucleotide sequence ID" value="XM_015293115.1"/>
</dbReference>
<dbReference type="RefSeq" id="XP_015148602.1">
    <property type="nucleotide sequence ID" value="XM_015293116.1"/>
</dbReference>
<dbReference type="SMR" id="Q58NQ4"/>
<dbReference type="FunCoup" id="Q58NQ4">
    <property type="interactions" value="1012"/>
</dbReference>
<dbReference type="STRING" id="9031.ENSGALP00000044290"/>
<dbReference type="GlyGen" id="Q58NQ4">
    <property type="glycosylation" value="1 site"/>
</dbReference>
<dbReference type="PaxDb" id="9031-ENSGALP00000012592"/>
<dbReference type="GeneID" id="416092"/>
<dbReference type="KEGG" id="gga:416092"/>
<dbReference type="CTD" id="27086"/>
<dbReference type="VEuPathDB" id="HostDB:geneid_416092"/>
<dbReference type="eggNOG" id="KOG4385">
    <property type="taxonomic scope" value="Eukaryota"/>
</dbReference>
<dbReference type="HOGENOM" id="CLU_019502_3_1_1"/>
<dbReference type="InParanoid" id="Q58NQ4"/>
<dbReference type="OrthoDB" id="5830876at2759"/>
<dbReference type="PhylomeDB" id="Q58NQ4"/>
<dbReference type="PRO" id="PR:Q58NQ4"/>
<dbReference type="Proteomes" id="UP000000539">
    <property type="component" value="Chromosome 12"/>
</dbReference>
<dbReference type="Bgee" id="ENSGALG00000007769">
    <property type="expression patterns" value="Expressed in granulocyte and 13 other cell types or tissues"/>
</dbReference>
<dbReference type="GO" id="GO:0005634">
    <property type="term" value="C:nucleus"/>
    <property type="evidence" value="ECO:0000318"/>
    <property type="project" value="GO_Central"/>
</dbReference>
<dbReference type="GO" id="GO:0001227">
    <property type="term" value="F:DNA-binding transcription repressor activity, RNA polymerase II-specific"/>
    <property type="evidence" value="ECO:0000318"/>
    <property type="project" value="GO_Central"/>
</dbReference>
<dbReference type="GO" id="GO:0000978">
    <property type="term" value="F:RNA polymerase II cis-regulatory region sequence-specific DNA binding"/>
    <property type="evidence" value="ECO:0000318"/>
    <property type="project" value="GO_Central"/>
</dbReference>
<dbReference type="GO" id="GO:0008270">
    <property type="term" value="F:zinc ion binding"/>
    <property type="evidence" value="ECO:0007669"/>
    <property type="project" value="UniProtKB-KW"/>
</dbReference>
<dbReference type="GO" id="GO:0008045">
    <property type="term" value="P:motor neuron axon guidance"/>
    <property type="evidence" value="ECO:0000250"/>
    <property type="project" value="UniProtKB"/>
</dbReference>
<dbReference type="GO" id="GO:0045893">
    <property type="term" value="P:positive regulation of DNA-templated transcription"/>
    <property type="evidence" value="ECO:0000250"/>
    <property type="project" value="UniProtKB"/>
</dbReference>
<dbReference type="GO" id="GO:0006357">
    <property type="term" value="P:regulation of transcription by RNA polymerase II"/>
    <property type="evidence" value="ECO:0000318"/>
    <property type="project" value="GO_Central"/>
</dbReference>
<dbReference type="GO" id="GO:0021517">
    <property type="term" value="P:ventral spinal cord development"/>
    <property type="evidence" value="ECO:0000270"/>
    <property type="project" value="UniProtKB"/>
</dbReference>
<dbReference type="CDD" id="cd20065">
    <property type="entry name" value="FH_FOXP2"/>
    <property type="match status" value="1"/>
</dbReference>
<dbReference type="FunFam" id="1.20.5.340:FF:000005">
    <property type="entry name" value="Forkhead box P1, isoform CRA_f"/>
    <property type="match status" value="1"/>
</dbReference>
<dbReference type="FunFam" id="1.10.10.10:FF:000010">
    <property type="entry name" value="Forkhead box P2 isoform B"/>
    <property type="match status" value="1"/>
</dbReference>
<dbReference type="Gene3D" id="1.20.5.340">
    <property type="match status" value="1"/>
</dbReference>
<dbReference type="Gene3D" id="1.10.10.10">
    <property type="entry name" value="Winged helix-like DNA-binding domain superfamily/Winged helix DNA-binding domain"/>
    <property type="match status" value="1"/>
</dbReference>
<dbReference type="InterPro" id="IPR047412">
    <property type="entry name" value="FH_FOXP1_P2"/>
</dbReference>
<dbReference type="InterPro" id="IPR001766">
    <property type="entry name" value="Fork_head_dom"/>
</dbReference>
<dbReference type="InterPro" id="IPR050998">
    <property type="entry name" value="FOXP"/>
</dbReference>
<dbReference type="InterPro" id="IPR032354">
    <property type="entry name" value="FOXP-CC"/>
</dbReference>
<dbReference type="InterPro" id="IPR030456">
    <property type="entry name" value="TF_fork_head_CS_2"/>
</dbReference>
<dbReference type="InterPro" id="IPR036388">
    <property type="entry name" value="WH-like_DNA-bd_sf"/>
</dbReference>
<dbReference type="InterPro" id="IPR036390">
    <property type="entry name" value="WH_DNA-bd_sf"/>
</dbReference>
<dbReference type="PANTHER" id="PTHR45796">
    <property type="entry name" value="FORKHEAD BOX P, ISOFORM C"/>
    <property type="match status" value="1"/>
</dbReference>
<dbReference type="PANTHER" id="PTHR45796:SF3">
    <property type="entry name" value="FORKHEAD BOX PROTEIN P1"/>
    <property type="match status" value="1"/>
</dbReference>
<dbReference type="Pfam" id="PF00250">
    <property type="entry name" value="Forkhead"/>
    <property type="match status" value="1"/>
</dbReference>
<dbReference type="Pfam" id="PF16159">
    <property type="entry name" value="FOXP-CC"/>
    <property type="match status" value="1"/>
</dbReference>
<dbReference type="PRINTS" id="PR00053">
    <property type="entry name" value="FORKHEAD"/>
</dbReference>
<dbReference type="SMART" id="SM00339">
    <property type="entry name" value="FH"/>
    <property type="match status" value="1"/>
</dbReference>
<dbReference type="SUPFAM" id="SSF46785">
    <property type="entry name" value="Winged helix' DNA-binding domain"/>
    <property type="match status" value="1"/>
</dbReference>
<dbReference type="PROSITE" id="PS00658">
    <property type="entry name" value="FORK_HEAD_2"/>
    <property type="match status" value="1"/>
</dbReference>
<dbReference type="PROSITE" id="PS50039">
    <property type="entry name" value="FORK_HEAD_3"/>
    <property type="match status" value="1"/>
</dbReference>
<dbReference type="PROSITE" id="PS00028">
    <property type="entry name" value="ZINC_FINGER_C2H2_1"/>
    <property type="match status" value="1"/>
</dbReference>